<dbReference type="EMBL" id="CP000513">
    <property type="protein sequence ID" value="ABQ13564.1"/>
    <property type="molecule type" value="Genomic_DNA"/>
</dbReference>
<dbReference type="RefSeq" id="WP_012031624.1">
    <property type="nucleotide sequence ID" value="NC_009446.1"/>
</dbReference>
<dbReference type="SMR" id="A5EX18"/>
<dbReference type="STRING" id="246195.DNO_1340"/>
<dbReference type="KEGG" id="dno:DNO_1340"/>
<dbReference type="eggNOG" id="COG0234">
    <property type="taxonomic scope" value="Bacteria"/>
</dbReference>
<dbReference type="HOGENOM" id="CLU_132825_2_0_6"/>
<dbReference type="OrthoDB" id="9806791at2"/>
<dbReference type="Proteomes" id="UP000000248">
    <property type="component" value="Chromosome"/>
</dbReference>
<dbReference type="GO" id="GO:0005737">
    <property type="term" value="C:cytoplasm"/>
    <property type="evidence" value="ECO:0007669"/>
    <property type="project" value="UniProtKB-SubCell"/>
</dbReference>
<dbReference type="GO" id="GO:0005524">
    <property type="term" value="F:ATP binding"/>
    <property type="evidence" value="ECO:0007669"/>
    <property type="project" value="InterPro"/>
</dbReference>
<dbReference type="GO" id="GO:0046872">
    <property type="term" value="F:metal ion binding"/>
    <property type="evidence" value="ECO:0007669"/>
    <property type="project" value="TreeGrafter"/>
</dbReference>
<dbReference type="GO" id="GO:0044183">
    <property type="term" value="F:protein folding chaperone"/>
    <property type="evidence" value="ECO:0007669"/>
    <property type="project" value="InterPro"/>
</dbReference>
<dbReference type="GO" id="GO:0051087">
    <property type="term" value="F:protein-folding chaperone binding"/>
    <property type="evidence" value="ECO:0007669"/>
    <property type="project" value="TreeGrafter"/>
</dbReference>
<dbReference type="GO" id="GO:0051082">
    <property type="term" value="F:unfolded protein binding"/>
    <property type="evidence" value="ECO:0007669"/>
    <property type="project" value="TreeGrafter"/>
</dbReference>
<dbReference type="GO" id="GO:0051085">
    <property type="term" value="P:chaperone cofactor-dependent protein refolding"/>
    <property type="evidence" value="ECO:0007669"/>
    <property type="project" value="TreeGrafter"/>
</dbReference>
<dbReference type="CDD" id="cd00320">
    <property type="entry name" value="cpn10"/>
    <property type="match status" value="1"/>
</dbReference>
<dbReference type="FunFam" id="2.30.33.40:FF:000001">
    <property type="entry name" value="10 kDa chaperonin"/>
    <property type="match status" value="1"/>
</dbReference>
<dbReference type="Gene3D" id="2.30.33.40">
    <property type="entry name" value="GroES chaperonin"/>
    <property type="match status" value="1"/>
</dbReference>
<dbReference type="HAMAP" id="MF_00580">
    <property type="entry name" value="CH10"/>
    <property type="match status" value="1"/>
</dbReference>
<dbReference type="InterPro" id="IPR020818">
    <property type="entry name" value="Chaperonin_GroES"/>
</dbReference>
<dbReference type="InterPro" id="IPR037124">
    <property type="entry name" value="Chaperonin_GroES_sf"/>
</dbReference>
<dbReference type="InterPro" id="IPR018369">
    <property type="entry name" value="Chaprnonin_Cpn10_CS"/>
</dbReference>
<dbReference type="InterPro" id="IPR011032">
    <property type="entry name" value="GroES-like_sf"/>
</dbReference>
<dbReference type="NCBIfam" id="NF001527">
    <property type="entry name" value="PRK00364.1-2"/>
    <property type="match status" value="1"/>
</dbReference>
<dbReference type="NCBIfam" id="NF001531">
    <property type="entry name" value="PRK00364.2-2"/>
    <property type="match status" value="1"/>
</dbReference>
<dbReference type="NCBIfam" id="NF001533">
    <property type="entry name" value="PRK00364.2-4"/>
    <property type="match status" value="1"/>
</dbReference>
<dbReference type="NCBIfam" id="NF001534">
    <property type="entry name" value="PRK00364.2-5"/>
    <property type="match status" value="1"/>
</dbReference>
<dbReference type="PANTHER" id="PTHR10772">
    <property type="entry name" value="10 KDA HEAT SHOCK PROTEIN"/>
    <property type="match status" value="1"/>
</dbReference>
<dbReference type="PANTHER" id="PTHR10772:SF58">
    <property type="entry name" value="CO-CHAPERONIN GROES"/>
    <property type="match status" value="1"/>
</dbReference>
<dbReference type="Pfam" id="PF00166">
    <property type="entry name" value="Cpn10"/>
    <property type="match status" value="1"/>
</dbReference>
<dbReference type="PRINTS" id="PR00297">
    <property type="entry name" value="CHAPERONIN10"/>
</dbReference>
<dbReference type="SMART" id="SM00883">
    <property type="entry name" value="Cpn10"/>
    <property type="match status" value="1"/>
</dbReference>
<dbReference type="SUPFAM" id="SSF50129">
    <property type="entry name" value="GroES-like"/>
    <property type="match status" value="1"/>
</dbReference>
<dbReference type="PROSITE" id="PS00681">
    <property type="entry name" value="CHAPERONINS_CPN10"/>
    <property type="match status" value="1"/>
</dbReference>
<reference key="1">
    <citation type="journal article" date="2007" name="Nat. Biotechnol.">
        <title>Genome sequence and identification of candidate vaccine antigens from the animal pathogen Dichelobacter nodosus.</title>
        <authorList>
            <person name="Myers G.S.A."/>
            <person name="Parker D."/>
            <person name="Al-Hasani K."/>
            <person name="Kennan R.M."/>
            <person name="Seemann T."/>
            <person name="Ren Q."/>
            <person name="Badger J.H."/>
            <person name="Selengut J.D."/>
            <person name="Deboy R.T."/>
            <person name="Tettelin H."/>
            <person name="Boyce J.D."/>
            <person name="McCarl V.P."/>
            <person name="Han X."/>
            <person name="Nelson W.C."/>
            <person name="Madupu R."/>
            <person name="Mohamoud Y."/>
            <person name="Holley T."/>
            <person name="Fedorova N."/>
            <person name="Khouri H."/>
            <person name="Bottomley S.P."/>
            <person name="Whittington R.J."/>
            <person name="Adler B."/>
            <person name="Songer J.G."/>
            <person name="Rood J.I."/>
            <person name="Paulsen I.T."/>
        </authorList>
    </citation>
    <scope>NUCLEOTIDE SEQUENCE [LARGE SCALE GENOMIC DNA]</scope>
    <source>
        <strain>VCS1703A</strain>
    </source>
</reference>
<proteinExistence type="inferred from homology"/>
<feature type="chain" id="PRO_1000025252" description="Co-chaperonin GroES">
    <location>
        <begin position="1"/>
        <end position="95"/>
    </location>
</feature>
<sequence>MNLRPLHDRVIVKRQEEEKVSAGGIVLPGSAAEKPSQGEVIAVGEGKLLENGERRKMAVKAGDKILFGKYTGSEVKVDGVDYIIMREDEIFAVIE</sequence>
<keyword id="KW-0143">Chaperone</keyword>
<keyword id="KW-0963">Cytoplasm</keyword>
<keyword id="KW-1185">Reference proteome</keyword>
<comment type="function">
    <text evidence="1">Together with the chaperonin GroEL, plays an essential role in assisting protein folding. The GroEL-GroES system forms a nano-cage that allows encapsulation of the non-native substrate proteins and provides a physical environment optimized to promote and accelerate protein folding. GroES binds to the apical surface of the GroEL ring, thereby capping the opening of the GroEL channel.</text>
</comment>
<comment type="subunit">
    <text evidence="1">Heptamer of 7 subunits arranged in a ring. Interacts with the chaperonin GroEL.</text>
</comment>
<comment type="subcellular location">
    <subcellularLocation>
        <location evidence="1">Cytoplasm</location>
    </subcellularLocation>
</comment>
<comment type="similarity">
    <text evidence="1">Belongs to the GroES chaperonin family.</text>
</comment>
<gene>
    <name evidence="1" type="primary">groES</name>
    <name evidence="1" type="synonym">groS</name>
    <name type="ordered locus">DNO_1340</name>
</gene>
<evidence type="ECO:0000255" key="1">
    <source>
        <dbReference type="HAMAP-Rule" id="MF_00580"/>
    </source>
</evidence>
<name>CH10_DICNV</name>
<protein>
    <recommendedName>
        <fullName evidence="1">Co-chaperonin GroES</fullName>
    </recommendedName>
    <alternativeName>
        <fullName evidence="1">10 kDa chaperonin</fullName>
    </alternativeName>
    <alternativeName>
        <fullName evidence="1">Chaperonin-10</fullName>
        <shortName evidence="1">Cpn10</shortName>
    </alternativeName>
</protein>
<accession>A5EX18</accession>
<organism>
    <name type="scientific">Dichelobacter nodosus (strain VCS1703A)</name>
    <dbReference type="NCBI Taxonomy" id="246195"/>
    <lineage>
        <taxon>Bacteria</taxon>
        <taxon>Pseudomonadati</taxon>
        <taxon>Pseudomonadota</taxon>
        <taxon>Gammaproteobacteria</taxon>
        <taxon>Cardiobacteriales</taxon>
        <taxon>Cardiobacteriaceae</taxon>
        <taxon>Dichelobacter</taxon>
    </lineage>
</organism>